<gene>
    <name type="primary">abcD2</name>
    <name type="ORF">DDB_G0293194</name>
</gene>
<accession>Q8T8P3</accession>
<accession>Q54C14</accession>
<organism>
    <name type="scientific">Dictyostelium discoideum</name>
    <name type="common">Social amoeba</name>
    <dbReference type="NCBI Taxonomy" id="44689"/>
    <lineage>
        <taxon>Eukaryota</taxon>
        <taxon>Amoebozoa</taxon>
        <taxon>Evosea</taxon>
        <taxon>Eumycetozoa</taxon>
        <taxon>Dictyostelia</taxon>
        <taxon>Dictyosteliales</taxon>
        <taxon>Dictyosteliaceae</taxon>
        <taxon>Dictyostelium</taxon>
    </lineage>
</organism>
<evidence type="ECO:0000255" key="1">
    <source>
        <dbReference type="PROSITE-ProRule" id="PRU00434"/>
    </source>
</evidence>
<evidence type="ECO:0000255" key="2">
    <source>
        <dbReference type="PROSITE-ProRule" id="PRU00441"/>
    </source>
</evidence>
<evidence type="ECO:0000305" key="3"/>
<protein>
    <recommendedName>
        <fullName>ABC transporter D family member 2</fullName>
    </recommendedName>
    <alternativeName>
        <fullName>ABC transporter ABCD.2</fullName>
    </alternativeName>
</protein>
<proteinExistence type="inferred from homology"/>
<name>ABCD2_DICDI</name>
<comment type="subcellular location">
    <subcellularLocation>
        <location evidence="2">Membrane</location>
        <topology evidence="2">Multi-pass membrane protein</topology>
    </subcellularLocation>
</comment>
<comment type="similarity">
    <text evidence="3">Belongs to the ABC transporter superfamily. ABCD family. Peroxisomal fatty acyl CoA transporter (TC 3.A.1.203) subfamily.</text>
</comment>
<feature type="chain" id="PRO_0000370850" description="ABC transporter D family member 2">
    <location>
        <begin position="1"/>
        <end position="741"/>
    </location>
</feature>
<feature type="transmembrane region" description="Helical" evidence="2">
    <location>
        <begin position="39"/>
        <end position="59"/>
    </location>
</feature>
<feature type="transmembrane region" description="Helical" evidence="2">
    <location>
        <begin position="119"/>
        <end position="139"/>
    </location>
</feature>
<feature type="transmembrane region" description="Helical" evidence="2">
    <location>
        <begin position="260"/>
        <end position="280"/>
    </location>
</feature>
<feature type="domain" description="ABC transmembrane type-1" evidence="2">
    <location>
        <begin position="131"/>
        <end position="409"/>
    </location>
</feature>
<feature type="domain" description="ABC transporter" evidence="1">
    <location>
        <begin position="518"/>
        <end position="740"/>
    </location>
</feature>
<feature type="binding site" evidence="1">
    <location>
        <begin position="551"/>
        <end position="558"/>
    </location>
    <ligand>
        <name>ATP</name>
        <dbReference type="ChEBI" id="CHEBI:30616"/>
    </ligand>
</feature>
<sequence length="741" mass="83689">MEANFVSSALAGVQNNRSVKRSLDRLKSLFSSGQHQLNGSLGKKVFILLALGGGAFSLVKFYKAKNEGSSKQSGLIIDLKDKNSKKDKKRNVTRVDAVFFRRLAKIIRIVIPSLKSKEFLSLLYLTALLFARTMLSVSIAEIAGKNAQNLVARKWKEMRNGVLKFALVSIPASFVNASLKYETDMLALRFRKRLSEYVHKEYLEGVNFYKASHLGGADRIDNADQRVTSDIEQFCNSMSSLYTTLFKPFLDLVLFTRKLVVVMGWGSPLLMFSYFIVSGFLKKLIMPPFGRLTAKQSELEGNYRTVHQRLITNAEEIAFYDGSRKERQIINLSFGDIYNHTGYVSYLKCLVGIFDGFLVKYCASIVGYGCMVLPIYTGIRGSSGKDSTELTKDYIRNTQLMVALSQAIGQLVLLGNKVTLMAGYTSRVSELLEMIKSIKERGTSQFTIVHEDDVPNPLTNSPVNDKYDTSVDMSSWLEDWRKRSDQTRIVKRQQSNRSSASGATTVYGGGTFVEGDFIKFENVSIVSPEGKLLVENLDFQVMPNQNVMITGPNGSGKSSLFRILGELWPLHCGTVIKPRKEDILFVPQKPYLVLGTLRDQIIYPHSHDDMKKLGVTDDDLQHLLATVDPNLTIIRQWNWDDTKDWFTALSGGQKQRIAMARLFYHRPQYAILDECTSAVSDEVEGKIYETCKKLGITLFTVSHRPQLRAYHDYVLLFNGRGGWEWSKIDHDDDHLKKPLSH</sequence>
<reference key="1">
    <citation type="journal article" date="2002" name="Eukaryot. Cell">
        <title>Evolutionary analyses of ABC transporters of Dictyostelium discoideum.</title>
        <authorList>
            <person name="Anjard C."/>
            <person name="Loomis W.F."/>
        </authorList>
    </citation>
    <scope>NUCLEOTIDE SEQUENCE [GENOMIC DNA]</scope>
    <scope>NOMENCLATURE</scope>
    <source>
        <strain>AX4</strain>
    </source>
</reference>
<reference key="2">
    <citation type="journal article" date="2005" name="Nature">
        <title>The genome of the social amoeba Dictyostelium discoideum.</title>
        <authorList>
            <person name="Eichinger L."/>
            <person name="Pachebat J.A."/>
            <person name="Gloeckner G."/>
            <person name="Rajandream M.A."/>
            <person name="Sucgang R."/>
            <person name="Berriman M."/>
            <person name="Song J."/>
            <person name="Olsen R."/>
            <person name="Szafranski K."/>
            <person name="Xu Q."/>
            <person name="Tunggal B."/>
            <person name="Kummerfeld S."/>
            <person name="Madera M."/>
            <person name="Konfortov B.A."/>
            <person name="Rivero F."/>
            <person name="Bankier A.T."/>
            <person name="Lehmann R."/>
            <person name="Hamlin N."/>
            <person name="Davies R."/>
            <person name="Gaudet P."/>
            <person name="Fey P."/>
            <person name="Pilcher K."/>
            <person name="Chen G."/>
            <person name="Saunders D."/>
            <person name="Sodergren E.J."/>
            <person name="Davis P."/>
            <person name="Kerhornou A."/>
            <person name="Nie X."/>
            <person name="Hall N."/>
            <person name="Anjard C."/>
            <person name="Hemphill L."/>
            <person name="Bason N."/>
            <person name="Farbrother P."/>
            <person name="Desany B."/>
            <person name="Just E."/>
            <person name="Morio T."/>
            <person name="Rost R."/>
            <person name="Churcher C.M."/>
            <person name="Cooper J."/>
            <person name="Haydock S."/>
            <person name="van Driessche N."/>
            <person name="Cronin A."/>
            <person name="Goodhead I."/>
            <person name="Muzny D.M."/>
            <person name="Mourier T."/>
            <person name="Pain A."/>
            <person name="Lu M."/>
            <person name="Harper D."/>
            <person name="Lindsay R."/>
            <person name="Hauser H."/>
            <person name="James K.D."/>
            <person name="Quiles M."/>
            <person name="Madan Babu M."/>
            <person name="Saito T."/>
            <person name="Buchrieser C."/>
            <person name="Wardroper A."/>
            <person name="Felder M."/>
            <person name="Thangavelu M."/>
            <person name="Johnson D."/>
            <person name="Knights A."/>
            <person name="Loulseged H."/>
            <person name="Mungall K.L."/>
            <person name="Oliver K."/>
            <person name="Price C."/>
            <person name="Quail M.A."/>
            <person name="Urushihara H."/>
            <person name="Hernandez J."/>
            <person name="Rabbinowitsch E."/>
            <person name="Steffen D."/>
            <person name="Sanders M."/>
            <person name="Ma J."/>
            <person name="Kohara Y."/>
            <person name="Sharp S."/>
            <person name="Simmonds M.N."/>
            <person name="Spiegler S."/>
            <person name="Tivey A."/>
            <person name="Sugano S."/>
            <person name="White B."/>
            <person name="Walker D."/>
            <person name="Woodward J.R."/>
            <person name="Winckler T."/>
            <person name="Tanaka Y."/>
            <person name="Shaulsky G."/>
            <person name="Schleicher M."/>
            <person name="Weinstock G.M."/>
            <person name="Rosenthal A."/>
            <person name="Cox E.C."/>
            <person name="Chisholm R.L."/>
            <person name="Gibbs R.A."/>
            <person name="Loomis W.F."/>
            <person name="Platzer M."/>
            <person name="Kay R.R."/>
            <person name="Williams J.G."/>
            <person name="Dear P.H."/>
            <person name="Noegel A.A."/>
            <person name="Barrell B.G."/>
            <person name="Kuspa A."/>
        </authorList>
    </citation>
    <scope>NUCLEOTIDE SEQUENCE [LARGE SCALE GENOMIC DNA]</scope>
    <source>
        <strain>AX4</strain>
    </source>
</reference>
<dbReference type="EMBL" id="AY077633">
    <property type="protein sequence ID" value="AAL78684.1"/>
    <property type="molecule type" value="Genomic_DNA"/>
</dbReference>
<dbReference type="EMBL" id="AAFI02000200">
    <property type="protein sequence ID" value="EAL60796.1"/>
    <property type="molecule type" value="Genomic_DNA"/>
</dbReference>
<dbReference type="RefSeq" id="XP_629252.1">
    <property type="nucleotide sequence ID" value="XM_629250.1"/>
</dbReference>
<dbReference type="SMR" id="Q8T8P3"/>
<dbReference type="FunCoup" id="Q8T8P3">
    <property type="interactions" value="318"/>
</dbReference>
<dbReference type="STRING" id="44689.Q8T8P3"/>
<dbReference type="PaxDb" id="44689-DDB0214891"/>
<dbReference type="EnsemblProtists" id="EAL60796">
    <property type="protein sequence ID" value="EAL60796"/>
    <property type="gene ID" value="DDB_G0293194"/>
</dbReference>
<dbReference type="GeneID" id="8629134"/>
<dbReference type="KEGG" id="ddi:DDB_G0293194"/>
<dbReference type="dictyBase" id="DDB_G0293194">
    <property type="gene designation" value="abcD2"/>
</dbReference>
<dbReference type="VEuPathDB" id="AmoebaDB:DDB_G0293194"/>
<dbReference type="eggNOG" id="KOG0060">
    <property type="taxonomic scope" value="Eukaryota"/>
</dbReference>
<dbReference type="HOGENOM" id="CLU_007587_1_1_1"/>
<dbReference type="InParanoid" id="Q8T8P3"/>
<dbReference type="OMA" id="CHRTSLW"/>
<dbReference type="PhylomeDB" id="Q8T8P3"/>
<dbReference type="Reactome" id="R-DDI-1369062">
    <property type="pathway name" value="ABC transporters in lipid homeostasis"/>
</dbReference>
<dbReference type="Reactome" id="R-DDI-9603798">
    <property type="pathway name" value="Class I peroxisomal membrane protein import"/>
</dbReference>
<dbReference type="PRO" id="PR:Q8T8P3"/>
<dbReference type="Proteomes" id="UP000002195">
    <property type="component" value="Chromosome 6"/>
</dbReference>
<dbReference type="GO" id="GO:0043190">
    <property type="term" value="C:ATP-binding cassette (ABC) transporter complex"/>
    <property type="evidence" value="ECO:0000317"/>
    <property type="project" value="dictyBase"/>
</dbReference>
<dbReference type="GO" id="GO:0005778">
    <property type="term" value="C:peroxisomal membrane"/>
    <property type="evidence" value="ECO:0000318"/>
    <property type="project" value="GO_Central"/>
</dbReference>
<dbReference type="GO" id="GO:0140359">
    <property type="term" value="F:ABC-type transporter activity"/>
    <property type="evidence" value="ECO:0007669"/>
    <property type="project" value="InterPro"/>
</dbReference>
<dbReference type="GO" id="GO:0005524">
    <property type="term" value="F:ATP binding"/>
    <property type="evidence" value="ECO:0000318"/>
    <property type="project" value="GO_Central"/>
</dbReference>
<dbReference type="GO" id="GO:0016887">
    <property type="term" value="F:ATP hydrolysis activity"/>
    <property type="evidence" value="ECO:0007669"/>
    <property type="project" value="InterPro"/>
</dbReference>
<dbReference type="GO" id="GO:0042626">
    <property type="term" value="F:ATPase-coupled transmembrane transporter activity"/>
    <property type="evidence" value="ECO:0000318"/>
    <property type="project" value="GO_Central"/>
</dbReference>
<dbReference type="GO" id="GO:0005324">
    <property type="term" value="F:long-chain fatty acid transmembrane transporter activity"/>
    <property type="evidence" value="ECO:0000318"/>
    <property type="project" value="GO_Central"/>
</dbReference>
<dbReference type="GO" id="GO:0006635">
    <property type="term" value="P:fatty acid beta-oxidation"/>
    <property type="evidence" value="ECO:0000318"/>
    <property type="project" value="GO_Central"/>
</dbReference>
<dbReference type="GO" id="GO:0015910">
    <property type="term" value="P:long-chain fatty acid import into peroxisome"/>
    <property type="evidence" value="ECO:0000318"/>
    <property type="project" value="GO_Central"/>
</dbReference>
<dbReference type="GO" id="GO:0007031">
    <property type="term" value="P:peroxisome organization"/>
    <property type="evidence" value="ECO:0000318"/>
    <property type="project" value="GO_Central"/>
</dbReference>
<dbReference type="GO" id="GO:0031288">
    <property type="term" value="P:sorocarp morphogenesis"/>
    <property type="evidence" value="ECO:0000315"/>
    <property type="project" value="dictyBase"/>
</dbReference>
<dbReference type="GO" id="GO:0042760">
    <property type="term" value="P:very long-chain fatty acid catabolic process"/>
    <property type="evidence" value="ECO:0000318"/>
    <property type="project" value="GO_Central"/>
</dbReference>
<dbReference type="CDD" id="cd03223">
    <property type="entry name" value="ABCD_peroxisomal_ALDP"/>
    <property type="match status" value="1"/>
</dbReference>
<dbReference type="FunFam" id="3.40.50.300:FF:000636">
    <property type="entry name" value="ATP-binding cassette sub-family D member 3"/>
    <property type="match status" value="1"/>
</dbReference>
<dbReference type="Gene3D" id="1.20.1560.10">
    <property type="entry name" value="ABC transporter type 1, transmembrane domain"/>
    <property type="match status" value="1"/>
</dbReference>
<dbReference type="Gene3D" id="3.40.50.300">
    <property type="entry name" value="P-loop containing nucleotide triphosphate hydrolases"/>
    <property type="match status" value="1"/>
</dbReference>
<dbReference type="InterPro" id="IPR003593">
    <property type="entry name" value="AAA+_ATPase"/>
</dbReference>
<dbReference type="InterPro" id="IPR011527">
    <property type="entry name" value="ABC1_TM_dom"/>
</dbReference>
<dbReference type="InterPro" id="IPR036640">
    <property type="entry name" value="ABC1_TM_sf"/>
</dbReference>
<dbReference type="InterPro" id="IPR003439">
    <property type="entry name" value="ABC_transporter-like_ATP-bd"/>
</dbReference>
<dbReference type="InterPro" id="IPR017871">
    <property type="entry name" value="ABC_transporter-like_CS"/>
</dbReference>
<dbReference type="InterPro" id="IPR050835">
    <property type="entry name" value="ABC_transporter_sub-D"/>
</dbReference>
<dbReference type="InterPro" id="IPR027417">
    <property type="entry name" value="P-loop_NTPase"/>
</dbReference>
<dbReference type="PANTHER" id="PTHR11384:SF67">
    <property type="entry name" value="ATP-BINDING CASSETTE SUB-FAMILY D MEMBER 1"/>
    <property type="match status" value="1"/>
</dbReference>
<dbReference type="PANTHER" id="PTHR11384">
    <property type="entry name" value="ATP-BINDING CASSETTE, SUB-FAMILY D MEMBER"/>
    <property type="match status" value="1"/>
</dbReference>
<dbReference type="Pfam" id="PF06472">
    <property type="entry name" value="ABC_membrane_2"/>
    <property type="match status" value="1"/>
</dbReference>
<dbReference type="Pfam" id="PF00005">
    <property type="entry name" value="ABC_tran"/>
    <property type="match status" value="1"/>
</dbReference>
<dbReference type="SMART" id="SM00382">
    <property type="entry name" value="AAA"/>
    <property type="match status" value="1"/>
</dbReference>
<dbReference type="SUPFAM" id="SSF90123">
    <property type="entry name" value="ABC transporter transmembrane region"/>
    <property type="match status" value="1"/>
</dbReference>
<dbReference type="SUPFAM" id="SSF52540">
    <property type="entry name" value="P-loop containing nucleoside triphosphate hydrolases"/>
    <property type="match status" value="1"/>
</dbReference>
<dbReference type="PROSITE" id="PS50929">
    <property type="entry name" value="ABC_TM1F"/>
    <property type="match status" value="1"/>
</dbReference>
<dbReference type="PROSITE" id="PS00211">
    <property type="entry name" value="ABC_TRANSPORTER_1"/>
    <property type="match status" value="1"/>
</dbReference>
<dbReference type="PROSITE" id="PS50893">
    <property type="entry name" value="ABC_TRANSPORTER_2"/>
    <property type="match status" value="1"/>
</dbReference>
<keyword id="KW-0067">ATP-binding</keyword>
<keyword id="KW-0472">Membrane</keyword>
<keyword id="KW-0547">Nucleotide-binding</keyword>
<keyword id="KW-1185">Reference proteome</keyword>
<keyword id="KW-0812">Transmembrane</keyword>
<keyword id="KW-1133">Transmembrane helix</keyword>
<keyword id="KW-0813">Transport</keyword>